<protein>
    <recommendedName>
        <fullName evidence="1">Glutamate--tRNA ligase</fullName>
        <ecNumber evidence="1">6.1.1.17</ecNumber>
    </recommendedName>
    <alternativeName>
        <fullName evidence="1">Glutamyl-tRNA synthetase</fullName>
        <shortName evidence="1">GluRS</shortName>
    </alternativeName>
</protein>
<accession>Q47Z58</accession>
<gene>
    <name evidence="1" type="primary">gltX</name>
    <name type="ordered locus">CPS_3216</name>
</gene>
<dbReference type="EC" id="6.1.1.17" evidence="1"/>
<dbReference type="EMBL" id="CP000083">
    <property type="protein sequence ID" value="AAZ25341.1"/>
    <property type="molecule type" value="Genomic_DNA"/>
</dbReference>
<dbReference type="RefSeq" id="WP_011043999.1">
    <property type="nucleotide sequence ID" value="NC_003910.7"/>
</dbReference>
<dbReference type="SMR" id="Q47Z58"/>
<dbReference type="STRING" id="167879.CPS_3216"/>
<dbReference type="KEGG" id="cps:CPS_3216"/>
<dbReference type="eggNOG" id="COG0008">
    <property type="taxonomic scope" value="Bacteria"/>
</dbReference>
<dbReference type="HOGENOM" id="CLU_015768_6_0_6"/>
<dbReference type="Proteomes" id="UP000000547">
    <property type="component" value="Chromosome"/>
</dbReference>
<dbReference type="GO" id="GO:0005829">
    <property type="term" value="C:cytosol"/>
    <property type="evidence" value="ECO:0007669"/>
    <property type="project" value="TreeGrafter"/>
</dbReference>
<dbReference type="GO" id="GO:0005524">
    <property type="term" value="F:ATP binding"/>
    <property type="evidence" value="ECO:0007669"/>
    <property type="project" value="UniProtKB-UniRule"/>
</dbReference>
<dbReference type="GO" id="GO:0004818">
    <property type="term" value="F:glutamate-tRNA ligase activity"/>
    <property type="evidence" value="ECO:0007669"/>
    <property type="project" value="UniProtKB-UniRule"/>
</dbReference>
<dbReference type="GO" id="GO:0000049">
    <property type="term" value="F:tRNA binding"/>
    <property type="evidence" value="ECO:0007669"/>
    <property type="project" value="InterPro"/>
</dbReference>
<dbReference type="GO" id="GO:0008270">
    <property type="term" value="F:zinc ion binding"/>
    <property type="evidence" value="ECO:0007669"/>
    <property type="project" value="InterPro"/>
</dbReference>
<dbReference type="GO" id="GO:0006424">
    <property type="term" value="P:glutamyl-tRNA aminoacylation"/>
    <property type="evidence" value="ECO:0007669"/>
    <property type="project" value="UniProtKB-UniRule"/>
</dbReference>
<dbReference type="CDD" id="cd00808">
    <property type="entry name" value="GluRS_core"/>
    <property type="match status" value="1"/>
</dbReference>
<dbReference type="FunFam" id="3.40.50.620:FF:000007">
    <property type="entry name" value="Glutamate--tRNA ligase"/>
    <property type="match status" value="1"/>
</dbReference>
<dbReference type="Gene3D" id="1.10.10.350">
    <property type="match status" value="1"/>
</dbReference>
<dbReference type="Gene3D" id="3.40.50.620">
    <property type="entry name" value="HUPs"/>
    <property type="match status" value="1"/>
</dbReference>
<dbReference type="HAMAP" id="MF_00022">
    <property type="entry name" value="Glu_tRNA_synth_type1"/>
    <property type="match status" value="1"/>
</dbReference>
<dbReference type="InterPro" id="IPR045462">
    <property type="entry name" value="aa-tRNA-synth_I_cd-bd"/>
</dbReference>
<dbReference type="InterPro" id="IPR020751">
    <property type="entry name" value="aa-tRNA-synth_I_codon-bd_sub2"/>
</dbReference>
<dbReference type="InterPro" id="IPR001412">
    <property type="entry name" value="aa-tRNA-synth_I_CS"/>
</dbReference>
<dbReference type="InterPro" id="IPR008925">
    <property type="entry name" value="aa_tRNA-synth_I_cd-bd_sf"/>
</dbReference>
<dbReference type="InterPro" id="IPR004527">
    <property type="entry name" value="Glu-tRNA-ligase_bac/mito"/>
</dbReference>
<dbReference type="InterPro" id="IPR000924">
    <property type="entry name" value="Glu/Gln-tRNA-synth"/>
</dbReference>
<dbReference type="InterPro" id="IPR020058">
    <property type="entry name" value="Glu/Gln-tRNA-synth_Ib_cat-dom"/>
</dbReference>
<dbReference type="InterPro" id="IPR049940">
    <property type="entry name" value="GluQ/Sye"/>
</dbReference>
<dbReference type="InterPro" id="IPR033910">
    <property type="entry name" value="GluRS_core"/>
</dbReference>
<dbReference type="InterPro" id="IPR014729">
    <property type="entry name" value="Rossmann-like_a/b/a_fold"/>
</dbReference>
<dbReference type="NCBIfam" id="TIGR00464">
    <property type="entry name" value="gltX_bact"/>
    <property type="match status" value="1"/>
</dbReference>
<dbReference type="PANTHER" id="PTHR43311">
    <property type="entry name" value="GLUTAMATE--TRNA LIGASE"/>
    <property type="match status" value="1"/>
</dbReference>
<dbReference type="PANTHER" id="PTHR43311:SF2">
    <property type="entry name" value="GLUTAMATE--TRNA LIGASE, MITOCHONDRIAL-RELATED"/>
    <property type="match status" value="1"/>
</dbReference>
<dbReference type="Pfam" id="PF19269">
    <property type="entry name" value="Anticodon_2"/>
    <property type="match status" value="1"/>
</dbReference>
<dbReference type="Pfam" id="PF00749">
    <property type="entry name" value="tRNA-synt_1c"/>
    <property type="match status" value="1"/>
</dbReference>
<dbReference type="PRINTS" id="PR00987">
    <property type="entry name" value="TRNASYNTHGLU"/>
</dbReference>
<dbReference type="SUPFAM" id="SSF48163">
    <property type="entry name" value="An anticodon-binding domain of class I aminoacyl-tRNA synthetases"/>
    <property type="match status" value="1"/>
</dbReference>
<dbReference type="SUPFAM" id="SSF52374">
    <property type="entry name" value="Nucleotidylyl transferase"/>
    <property type="match status" value="1"/>
</dbReference>
<dbReference type="PROSITE" id="PS00178">
    <property type="entry name" value="AA_TRNA_LIGASE_I"/>
    <property type="match status" value="1"/>
</dbReference>
<feature type="chain" id="PRO_0000237354" description="Glutamate--tRNA ligase">
    <location>
        <begin position="1"/>
        <end position="470"/>
    </location>
</feature>
<feature type="short sequence motif" description="'HIGH' region" evidence="1">
    <location>
        <begin position="9"/>
        <end position="19"/>
    </location>
</feature>
<feature type="short sequence motif" description="'KMSKS' region" evidence="1">
    <location>
        <begin position="236"/>
        <end position="240"/>
    </location>
</feature>
<feature type="binding site" evidence="1">
    <location>
        <position position="239"/>
    </location>
    <ligand>
        <name>ATP</name>
        <dbReference type="ChEBI" id="CHEBI:30616"/>
    </ligand>
</feature>
<keyword id="KW-0030">Aminoacyl-tRNA synthetase</keyword>
<keyword id="KW-0067">ATP-binding</keyword>
<keyword id="KW-0963">Cytoplasm</keyword>
<keyword id="KW-0436">Ligase</keyword>
<keyword id="KW-0547">Nucleotide-binding</keyword>
<keyword id="KW-0648">Protein biosynthesis</keyword>
<reference key="1">
    <citation type="journal article" date="2005" name="Proc. Natl. Acad. Sci. U.S.A.">
        <title>The psychrophilic lifestyle as revealed by the genome sequence of Colwellia psychrerythraea 34H through genomic and proteomic analyses.</title>
        <authorList>
            <person name="Methe B.A."/>
            <person name="Nelson K.E."/>
            <person name="Deming J.W."/>
            <person name="Momen B."/>
            <person name="Melamud E."/>
            <person name="Zhang X."/>
            <person name="Moult J."/>
            <person name="Madupu R."/>
            <person name="Nelson W.C."/>
            <person name="Dodson R.J."/>
            <person name="Brinkac L.M."/>
            <person name="Daugherty S.C."/>
            <person name="Durkin A.S."/>
            <person name="DeBoy R.T."/>
            <person name="Kolonay J.F."/>
            <person name="Sullivan S.A."/>
            <person name="Zhou L."/>
            <person name="Davidsen T.M."/>
            <person name="Wu M."/>
            <person name="Huston A.L."/>
            <person name="Lewis M."/>
            <person name="Weaver B."/>
            <person name="Weidman J.F."/>
            <person name="Khouri H."/>
            <person name="Utterback T.R."/>
            <person name="Feldblyum T.V."/>
            <person name="Fraser C.M."/>
        </authorList>
    </citation>
    <scope>NUCLEOTIDE SEQUENCE [LARGE SCALE GENOMIC DNA]</scope>
    <source>
        <strain>34H / ATCC BAA-681</strain>
    </source>
</reference>
<organism>
    <name type="scientific">Colwellia psychrerythraea (strain 34H / ATCC BAA-681)</name>
    <name type="common">Vibrio psychroerythus</name>
    <dbReference type="NCBI Taxonomy" id="167879"/>
    <lineage>
        <taxon>Bacteria</taxon>
        <taxon>Pseudomonadati</taxon>
        <taxon>Pseudomonadota</taxon>
        <taxon>Gammaproteobacteria</taxon>
        <taxon>Alteromonadales</taxon>
        <taxon>Colwelliaceae</taxon>
        <taxon>Colwellia</taxon>
    </lineage>
</organism>
<evidence type="ECO:0000255" key="1">
    <source>
        <dbReference type="HAMAP-Rule" id="MF_00022"/>
    </source>
</evidence>
<sequence length="470" mass="52732">MTLTTRFAPSPTGYLHVGGARTALYSWLYAKKNGGDFILRIEDTDLERSTQASVDAIMDGMNWLNLEWTHGPYFQTERFDRYNEAIEQLIASGNAYRCYSTSEEVDAMREEAKAKGEIEKYNGLWRDRTDHPADKPFVIRFKNPLEGDVIIKDMVKGDIAISNGQLDDLIIARSDGTPTYNLTVVVDDWDMKVSHVVRGDDHVSNTPKQINILRALGADVPQYAHIPMILGDDGKRLSKRHGAVGVMQYRDDGFLPEALLNYLVRLGWSHGDQEIFSREEMIELFDLKDCNRAPSGFNTDKLIWVNQHYMKTMDPAYVAEHLAWHMADQGINTENGPALADVVRIQADRVKTLKEMADISRYFYEDFTELDAKAVKKHLRPVVKEPMILVKEKLAALTDWSPEPIHAAINDTAVELELGMGKVGMPLRVAATGGGNSPSLDITLALLDQSKVIERIEQALVVVEARIAAG</sequence>
<name>SYE_COLP3</name>
<comment type="function">
    <text evidence="1">Catalyzes the attachment of glutamate to tRNA(Glu) in a two-step reaction: glutamate is first activated by ATP to form Glu-AMP and then transferred to the acceptor end of tRNA(Glu).</text>
</comment>
<comment type="catalytic activity">
    <reaction evidence="1">
        <text>tRNA(Glu) + L-glutamate + ATP = L-glutamyl-tRNA(Glu) + AMP + diphosphate</text>
        <dbReference type="Rhea" id="RHEA:23540"/>
        <dbReference type="Rhea" id="RHEA-COMP:9663"/>
        <dbReference type="Rhea" id="RHEA-COMP:9680"/>
        <dbReference type="ChEBI" id="CHEBI:29985"/>
        <dbReference type="ChEBI" id="CHEBI:30616"/>
        <dbReference type="ChEBI" id="CHEBI:33019"/>
        <dbReference type="ChEBI" id="CHEBI:78442"/>
        <dbReference type="ChEBI" id="CHEBI:78520"/>
        <dbReference type="ChEBI" id="CHEBI:456215"/>
        <dbReference type="EC" id="6.1.1.17"/>
    </reaction>
</comment>
<comment type="subunit">
    <text evidence="1">Monomer.</text>
</comment>
<comment type="subcellular location">
    <subcellularLocation>
        <location evidence="1">Cytoplasm</location>
    </subcellularLocation>
</comment>
<comment type="similarity">
    <text evidence="1">Belongs to the class-I aminoacyl-tRNA synthetase family. Glutamate--tRNA ligase type 1 subfamily.</text>
</comment>
<proteinExistence type="inferred from homology"/>